<dbReference type="EC" id="7.4.2.8" evidence="1"/>
<dbReference type="EMBL" id="CP000439">
    <property type="protein sequence ID" value="ABK89564.1"/>
    <property type="molecule type" value="Genomic_DNA"/>
</dbReference>
<dbReference type="RefSeq" id="WP_003033484.1">
    <property type="nucleotide sequence ID" value="NZ_CP009633.1"/>
</dbReference>
<dbReference type="SMR" id="A0Q5P9"/>
<dbReference type="KEGG" id="ftn:FTN_0672"/>
<dbReference type="KEGG" id="ftx:AW25_1353"/>
<dbReference type="BioCyc" id="FTUL401614:G1G75-698-MONOMER"/>
<dbReference type="Proteomes" id="UP000000762">
    <property type="component" value="Chromosome"/>
</dbReference>
<dbReference type="GO" id="GO:0031522">
    <property type="term" value="C:cell envelope Sec protein transport complex"/>
    <property type="evidence" value="ECO:0007669"/>
    <property type="project" value="TreeGrafter"/>
</dbReference>
<dbReference type="GO" id="GO:0005829">
    <property type="term" value="C:cytosol"/>
    <property type="evidence" value="ECO:0007669"/>
    <property type="project" value="TreeGrafter"/>
</dbReference>
<dbReference type="GO" id="GO:0005886">
    <property type="term" value="C:plasma membrane"/>
    <property type="evidence" value="ECO:0007669"/>
    <property type="project" value="UniProtKB-SubCell"/>
</dbReference>
<dbReference type="GO" id="GO:0005524">
    <property type="term" value="F:ATP binding"/>
    <property type="evidence" value="ECO:0007669"/>
    <property type="project" value="UniProtKB-UniRule"/>
</dbReference>
<dbReference type="GO" id="GO:0046872">
    <property type="term" value="F:metal ion binding"/>
    <property type="evidence" value="ECO:0007669"/>
    <property type="project" value="UniProtKB-KW"/>
</dbReference>
<dbReference type="GO" id="GO:0008564">
    <property type="term" value="F:protein-exporting ATPase activity"/>
    <property type="evidence" value="ECO:0007669"/>
    <property type="project" value="UniProtKB-EC"/>
</dbReference>
<dbReference type="GO" id="GO:0065002">
    <property type="term" value="P:intracellular protein transmembrane transport"/>
    <property type="evidence" value="ECO:0007669"/>
    <property type="project" value="UniProtKB-UniRule"/>
</dbReference>
<dbReference type="GO" id="GO:0017038">
    <property type="term" value="P:protein import"/>
    <property type="evidence" value="ECO:0007669"/>
    <property type="project" value="InterPro"/>
</dbReference>
<dbReference type="GO" id="GO:0006605">
    <property type="term" value="P:protein targeting"/>
    <property type="evidence" value="ECO:0007669"/>
    <property type="project" value="UniProtKB-UniRule"/>
</dbReference>
<dbReference type="GO" id="GO:0043952">
    <property type="term" value="P:protein transport by the Sec complex"/>
    <property type="evidence" value="ECO:0007669"/>
    <property type="project" value="TreeGrafter"/>
</dbReference>
<dbReference type="CDD" id="cd17928">
    <property type="entry name" value="DEXDc_SecA"/>
    <property type="match status" value="1"/>
</dbReference>
<dbReference type="CDD" id="cd18803">
    <property type="entry name" value="SF2_C_secA"/>
    <property type="match status" value="1"/>
</dbReference>
<dbReference type="FunFam" id="3.40.50.300:FF:000113">
    <property type="entry name" value="Preprotein translocase subunit SecA"/>
    <property type="match status" value="1"/>
</dbReference>
<dbReference type="FunFam" id="3.90.1440.10:FF:000001">
    <property type="entry name" value="Preprotein translocase subunit SecA"/>
    <property type="match status" value="1"/>
</dbReference>
<dbReference type="FunFam" id="1.10.3060.10:FF:000003">
    <property type="entry name" value="Protein translocase subunit SecA"/>
    <property type="match status" value="1"/>
</dbReference>
<dbReference type="FunFam" id="3.40.50.300:FF:000334">
    <property type="entry name" value="Protein translocase subunit SecA"/>
    <property type="match status" value="1"/>
</dbReference>
<dbReference type="Gene3D" id="1.10.3060.10">
    <property type="entry name" value="Helical scaffold and wing domains of SecA"/>
    <property type="match status" value="1"/>
</dbReference>
<dbReference type="Gene3D" id="3.40.50.300">
    <property type="entry name" value="P-loop containing nucleotide triphosphate hydrolases"/>
    <property type="match status" value="2"/>
</dbReference>
<dbReference type="Gene3D" id="3.90.1440.10">
    <property type="entry name" value="SecA, preprotein cross-linking domain"/>
    <property type="match status" value="1"/>
</dbReference>
<dbReference type="HAMAP" id="MF_01382">
    <property type="entry name" value="SecA"/>
    <property type="match status" value="1"/>
</dbReference>
<dbReference type="InterPro" id="IPR014001">
    <property type="entry name" value="Helicase_ATP-bd"/>
</dbReference>
<dbReference type="InterPro" id="IPR001650">
    <property type="entry name" value="Helicase_C-like"/>
</dbReference>
<dbReference type="InterPro" id="IPR027417">
    <property type="entry name" value="P-loop_NTPase"/>
</dbReference>
<dbReference type="InterPro" id="IPR004027">
    <property type="entry name" value="SEC_C_motif"/>
</dbReference>
<dbReference type="InterPro" id="IPR000185">
    <property type="entry name" value="SecA"/>
</dbReference>
<dbReference type="InterPro" id="IPR020937">
    <property type="entry name" value="SecA_CS"/>
</dbReference>
<dbReference type="InterPro" id="IPR011115">
    <property type="entry name" value="SecA_DEAD"/>
</dbReference>
<dbReference type="InterPro" id="IPR014018">
    <property type="entry name" value="SecA_motor_DEAD"/>
</dbReference>
<dbReference type="InterPro" id="IPR011130">
    <property type="entry name" value="SecA_preprotein_X-link_dom"/>
</dbReference>
<dbReference type="InterPro" id="IPR044722">
    <property type="entry name" value="SecA_SF2_C"/>
</dbReference>
<dbReference type="InterPro" id="IPR011116">
    <property type="entry name" value="SecA_Wing/Scaffold"/>
</dbReference>
<dbReference type="InterPro" id="IPR036266">
    <property type="entry name" value="SecA_Wing/Scaffold_sf"/>
</dbReference>
<dbReference type="InterPro" id="IPR036670">
    <property type="entry name" value="SecA_X-link_sf"/>
</dbReference>
<dbReference type="NCBIfam" id="NF009538">
    <property type="entry name" value="PRK12904.1"/>
    <property type="match status" value="1"/>
</dbReference>
<dbReference type="NCBIfam" id="TIGR00963">
    <property type="entry name" value="secA"/>
    <property type="match status" value="1"/>
</dbReference>
<dbReference type="PANTHER" id="PTHR30612:SF0">
    <property type="entry name" value="CHLOROPLAST PROTEIN-TRANSPORTING ATPASE"/>
    <property type="match status" value="1"/>
</dbReference>
<dbReference type="PANTHER" id="PTHR30612">
    <property type="entry name" value="SECA INNER MEMBRANE COMPONENT OF SEC PROTEIN SECRETION SYSTEM"/>
    <property type="match status" value="1"/>
</dbReference>
<dbReference type="Pfam" id="PF21090">
    <property type="entry name" value="P-loop_SecA"/>
    <property type="match status" value="1"/>
</dbReference>
<dbReference type="Pfam" id="PF02810">
    <property type="entry name" value="SEC-C"/>
    <property type="match status" value="1"/>
</dbReference>
<dbReference type="Pfam" id="PF07517">
    <property type="entry name" value="SecA_DEAD"/>
    <property type="match status" value="1"/>
</dbReference>
<dbReference type="Pfam" id="PF01043">
    <property type="entry name" value="SecA_PP_bind"/>
    <property type="match status" value="1"/>
</dbReference>
<dbReference type="Pfam" id="PF07516">
    <property type="entry name" value="SecA_SW"/>
    <property type="match status" value="1"/>
</dbReference>
<dbReference type="PRINTS" id="PR00906">
    <property type="entry name" value="SECA"/>
</dbReference>
<dbReference type="SMART" id="SM00957">
    <property type="entry name" value="SecA_DEAD"/>
    <property type="match status" value="1"/>
</dbReference>
<dbReference type="SMART" id="SM00958">
    <property type="entry name" value="SecA_PP_bind"/>
    <property type="match status" value="1"/>
</dbReference>
<dbReference type="SUPFAM" id="SSF81886">
    <property type="entry name" value="Helical scaffold and wing domains of SecA"/>
    <property type="match status" value="1"/>
</dbReference>
<dbReference type="SUPFAM" id="SSF52540">
    <property type="entry name" value="P-loop containing nucleoside triphosphate hydrolases"/>
    <property type="match status" value="2"/>
</dbReference>
<dbReference type="SUPFAM" id="SSF81767">
    <property type="entry name" value="Pre-protein crosslinking domain of SecA"/>
    <property type="match status" value="1"/>
</dbReference>
<dbReference type="PROSITE" id="PS01312">
    <property type="entry name" value="SECA"/>
    <property type="match status" value="1"/>
</dbReference>
<dbReference type="PROSITE" id="PS51196">
    <property type="entry name" value="SECA_MOTOR_DEAD"/>
    <property type="match status" value="1"/>
</dbReference>
<sequence length="906" mass="103571">MLSLVQKIIGSRNERFIKKVSRIVQKINSLEPEFEKLSDEQLKAKTFEYRERLANGEILDNLLPEAFATVREAGKRTKNMRHYDVQLIGGIVLHQGKVAEMRTGEGKTLVATLPAYLNALTGDGVHVITVNDYLAKRDAELMSDIYEFLGMSVGVIVADLNPQQRKEAYACDITYGTNNEFGFDYLRDNMAYEKEQQVQRSRNYVIIDEVDSILIDEARTPLIISGASDDSSEMYNLFNRLVPYLEKQEKEEVENEQEQRDFYVDEKSKNAYLTEKGYAKIENMLKKEGILEEDDNLYSPHNITKMHYLNACLRAHSLYQLNIDYIVRDQEIVIIDESTGRAMPGRRWSDGLHQAIEAKEGVKINAENQTMASITFQNFFKLYNKIAGMTGTADTEAFELHSIYGLEVIIIPTNKPMIRKDHHDEIYGSVREKFDAIVEDIKERISKGQPVLVGTASIEASEVLSTLLKKKKIRHNVLNAKQHEKEASIIAMAGYPGNVTIATNMAGRGTDIILGGNLEVEIAQLEDPTPEDIAQIKAEWLKRNEAVKKAGGLCIIGSERHDSRRIDNQLRGRAARQGDPGESKFYLSMDDNLLRIFASQSMAERVKKGLKGGESLAFGFMSKVISKAQGKVESYHFDIRKNLLEYDNVVNTQRKVIYEQRQSFLEAEDVSDILADIRIDVAEQLFHDYVPAGSMHELWDLEGLEKALKSDFMIELDLQKLYQEDDSLGEEDLKKLVREAIEIEFVEKTKNLDSGAVRQFEKFSLLQSLDTHWREHLSSIDHLRNSINLRGYAQKDPKNEYKKEAFELFSTMLDNFKYEVISSLAKIRIATEEETQRAQQEWQESMSDIKAEHESVIDNNQRHDEDEQEETPKVQQVRREGPKVKRNDPCPCGSGKKYKQCHGKVE</sequence>
<gene>
    <name evidence="1" type="primary">secA</name>
    <name type="ordered locus">FTN_0672</name>
</gene>
<feature type="chain" id="PRO_0000320816" description="Protein translocase subunit SecA">
    <location>
        <begin position="1"/>
        <end position="906"/>
    </location>
</feature>
<feature type="region of interest" description="Disordered" evidence="2">
    <location>
        <begin position="853"/>
        <end position="906"/>
    </location>
</feature>
<feature type="compositionally biased region" description="Basic and acidic residues" evidence="2">
    <location>
        <begin position="853"/>
        <end position="865"/>
    </location>
</feature>
<feature type="compositionally biased region" description="Basic and acidic residues" evidence="2">
    <location>
        <begin position="877"/>
        <end position="888"/>
    </location>
</feature>
<feature type="compositionally biased region" description="Basic residues" evidence="2">
    <location>
        <begin position="896"/>
        <end position="906"/>
    </location>
</feature>
<feature type="binding site" evidence="1">
    <location>
        <position position="86"/>
    </location>
    <ligand>
        <name>ATP</name>
        <dbReference type="ChEBI" id="CHEBI:30616"/>
    </ligand>
</feature>
<feature type="binding site" evidence="1">
    <location>
        <begin position="104"/>
        <end position="108"/>
    </location>
    <ligand>
        <name>ATP</name>
        <dbReference type="ChEBI" id="CHEBI:30616"/>
    </ligand>
</feature>
<feature type="binding site" evidence="1">
    <location>
        <position position="511"/>
    </location>
    <ligand>
        <name>ATP</name>
        <dbReference type="ChEBI" id="CHEBI:30616"/>
    </ligand>
</feature>
<feature type="binding site" evidence="1">
    <location>
        <position position="890"/>
    </location>
    <ligand>
        <name>Zn(2+)</name>
        <dbReference type="ChEBI" id="CHEBI:29105"/>
    </ligand>
</feature>
<feature type="binding site" evidence="1">
    <location>
        <position position="892"/>
    </location>
    <ligand>
        <name>Zn(2+)</name>
        <dbReference type="ChEBI" id="CHEBI:29105"/>
    </ligand>
</feature>
<feature type="binding site" evidence="1">
    <location>
        <position position="901"/>
    </location>
    <ligand>
        <name>Zn(2+)</name>
        <dbReference type="ChEBI" id="CHEBI:29105"/>
    </ligand>
</feature>
<feature type="binding site" evidence="1">
    <location>
        <position position="902"/>
    </location>
    <ligand>
        <name>Zn(2+)</name>
        <dbReference type="ChEBI" id="CHEBI:29105"/>
    </ligand>
</feature>
<comment type="function">
    <text evidence="1">Part of the Sec protein translocase complex. Interacts with the SecYEG preprotein conducting channel. Has a central role in coupling the hydrolysis of ATP to the transfer of proteins into and across the cell membrane, serving both as a receptor for the preprotein-SecB complex and as an ATP-driven molecular motor driving the stepwise translocation of polypeptide chains across the membrane.</text>
</comment>
<comment type="catalytic activity">
    <reaction evidence="1">
        <text>ATP + H2O + cellular proteinSide 1 = ADP + phosphate + cellular proteinSide 2.</text>
        <dbReference type="EC" id="7.4.2.8"/>
    </reaction>
</comment>
<comment type="cofactor">
    <cofactor evidence="1">
        <name>Zn(2+)</name>
        <dbReference type="ChEBI" id="CHEBI:29105"/>
    </cofactor>
    <text evidence="1">May bind 1 zinc ion per subunit.</text>
</comment>
<comment type="subunit">
    <text evidence="1">Monomer and homodimer. Part of the essential Sec protein translocation apparatus which comprises SecA, SecYEG and auxiliary proteins SecDF-YajC and YidC.</text>
</comment>
<comment type="subcellular location">
    <subcellularLocation>
        <location evidence="1">Cell inner membrane</location>
        <topology evidence="1">Peripheral membrane protein</topology>
        <orientation evidence="1">Cytoplasmic side</orientation>
    </subcellularLocation>
    <subcellularLocation>
        <location evidence="1">Cytoplasm</location>
    </subcellularLocation>
    <text evidence="1">Distribution is 50-50.</text>
</comment>
<comment type="similarity">
    <text evidence="1">Belongs to the SecA family.</text>
</comment>
<organism>
    <name type="scientific">Francisella tularensis subsp. novicida (strain U112)</name>
    <dbReference type="NCBI Taxonomy" id="401614"/>
    <lineage>
        <taxon>Bacteria</taxon>
        <taxon>Pseudomonadati</taxon>
        <taxon>Pseudomonadota</taxon>
        <taxon>Gammaproteobacteria</taxon>
        <taxon>Thiotrichales</taxon>
        <taxon>Francisellaceae</taxon>
        <taxon>Francisella</taxon>
    </lineage>
</organism>
<keyword id="KW-0067">ATP-binding</keyword>
<keyword id="KW-0997">Cell inner membrane</keyword>
<keyword id="KW-1003">Cell membrane</keyword>
<keyword id="KW-0963">Cytoplasm</keyword>
<keyword id="KW-0472">Membrane</keyword>
<keyword id="KW-0479">Metal-binding</keyword>
<keyword id="KW-0547">Nucleotide-binding</keyword>
<keyword id="KW-0653">Protein transport</keyword>
<keyword id="KW-1278">Translocase</keyword>
<keyword id="KW-0811">Translocation</keyword>
<keyword id="KW-0813">Transport</keyword>
<keyword id="KW-0862">Zinc</keyword>
<evidence type="ECO:0000255" key="1">
    <source>
        <dbReference type="HAMAP-Rule" id="MF_01382"/>
    </source>
</evidence>
<evidence type="ECO:0000256" key="2">
    <source>
        <dbReference type="SAM" id="MobiDB-lite"/>
    </source>
</evidence>
<accession>A0Q5P9</accession>
<name>SECA_FRATN</name>
<proteinExistence type="inferred from homology"/>
<protein>
    <recommendedName>
        <fullName evidence="1">Protein translocase subunit SecA</fullName>
        <ecNumber evidence="1">7.4.2.8</ecNumber>
    </recommendedName>
</protein>
<reference key="1">
    <citation type="journal article" date="2007" name="Genome Biol.">
        <title>Comparison of Francisella tularensis genomes reveals evolutionary events associated with the emergence of human pathogenic strains.</title>
        <authorList>
            <person name="Rohmer L."/>
            <person name="Fong C."/>
            <person name="Abmayr S."/>
            <person name="Wasnick M."/>
            <person name="Larson Freeman T.J."/>
            <person name="Radey M."/>
            <person name="Guina T."/>
            <person name="Svensson K."/>
            <person name="Hayden H.S."/>
            <person name="Jacobs M."/>
            <person name="Gallagher L.A."/>
            <person name="Manoil C."/>
            <person name="Ernst R.K."/>
            <person name="Drees B."/>
            <person name="Buckley D."/>
            <person name="Haugen E."/>
            <person name="Bovee D."/>
            <person name="Zhou Y."/>
            <person name="Chang J."/>
            <person name="Levy R."/>
            <person name="Lim R."/>
            <person name="Gillett W."/>
            <person name="Guenthener D."/>
            <person name="Kang A."/>
            <person name="Shaffer S.A."/>
            <person name="Taylor G."/>
            <person name="Chen J."/>
            <person name="Gallis B."/>
            <person name="D'Argenio D.A."/>
            <person name="Forsman M."/>
            <person name="Olson M.V."/>
            <person name="Goodlett D.R."/>
            <person name="Kaul R."/>
            <person name="Miller S.I."/>
            <person name="Brittnacher M.J."/>
        </authorList>
    </citation>
    <scope>NUCLEOTIDE SEQUENCE [LARGE SCALE GENOMIC DNA]</scope>
    <source>
        <strain>U112</strain>
    </source>
</reference>